<protein>
    <recommendedName>
        <fullName evidence="1">Exodeoxyribonuclease 7 large subunit</fullName>
        <ecNumber evidence="1">3.1.11.6</ecNumber>
    </recommendedName>
    <alternativeName>
        <fullName evidence="1">Exodeoxyribonuclease VII large subunit</fullName>
        <shortName evidence="1">Exonuclease VII large subunit</shortName>
    </alternativeName>
</protein>
<accession>B2A531</accession>
<comment type="function">
    <text evidence="1">Bidirectionally degrades single-stranded DNA into large acid-insoluble oligonucleotides, which are then degraded further into small acid-soluble oligonucleotides.</text>
</comment>
<comment type="catalytic activity">
    <reaction evidence="1">
        <text>Exonucleolytic cleavage in either 5'- to 3'- or 3'- to 5'-direction to yield nucleoside 5'-phosphates.</text>
        <dbReference type="EC" id="3.1.11.6"/>
    </reaction>
</comment>
<comment type="subunit">
    <text evidence="1">Heterooligomer composed of large and small subunits.</text>
</comment>
<comment type="subcellular location">
    <subcellularLocation>
        <location evidence="1">Cytoplasm</location>
    </subcellularLocation>
</comment>
<comment type="similarity">
    <text evidence="1">Belongs to the XseA family.</text>
</comment>
<name>EX7L_NATTJ</name>
<feature type="chain" id="PRO_1000122074" description="Exodeoxyribonuclease 7 large subunit">
    <location>
        <begin position="1"/>
        <end position="423"/>
    </location>
</feature>
<evidence type="ECO:0000255" key="1">
    <source>
        <dbReference type="HAMAP-Rule" id="MF_00378"/>
    </source>
</evidence>
<sequence>MSERTVTVSQLTNYLKNLLLQDHNLKNVLVRGEISNFKHHSSGHMYFTLKDEGASLRCVMFRNRNWNLDFSPQDGMDVIVQGVVGIFERAGLYQLYVEKMYSHGLGSLHLAFEQLKEKLAEEGIFNEEYKKTLPPFPKKIAVVTSPTGAAVRDMIVTISRRFPLTSILLIPVRVQGEYAASEIRAGIDYANSIDDIDVILVGRGGGSLEEIWPFNTEEVARAIFSSKAPVISCVGHETDFTISDFVSDLRAPTPTAAAELVVPDQVELKRQVSDYKHRLTKALYHKYRNLDQRVVELLDRPVMKNPYTLISERKKELEYLDQRLLREVYHLFKLKRNKYSSLVEQLDSLSPLKTLGRGYTFCQTHDGDIVRSVTDIEQEDILKLTFFDGSAKCLVKEKQEHHISEDHSNLNSLCNEEEDYDRQ</sequence>
<organism>
    <name type="scientific">Natranaerobius thermophilus (strain ATCC BAA-1301 / DSM 18059 / JW/NM-WN-LF)</name>
    <dbReference type="NCBI Taxonomy" id="457570"/>
    <lineage>
        <taxon>Bacteria</taxon>
        <taxon>Bacillati</taxon>
        <taxon>Bacillota</taxon>
        <taxon>Clostridia</taxon>
        <taxon>Natranaerobiales</taxon>
        <taxon>Natranaerobiaceae</taxon>
        <taxon>Natranaerobius</taxon>
    </lineage>
</organism>
<proteinExistence type="inferred from homology"/>
<gene>
    <name evidence="1" type="primary">xseA</name>
    <name type="ordered locus">Nther_1699</name>
</gene>
<keyword id="KW-0963">Cytoplasm</keyword>
<keyword id="KW-0269">Exonuclease</keyword>
<keyword id="KW-0378">Hydrolase</keyword>
<keyword id="KW-0540">Nuclease</keyword>
<keyword id="KW-1185">Reference proteome</keyword>
<reference key="1">
    <citation type="submission" date="2008-04" db="EMBL/GenBank/DDBJ databases">
        <title>Complete sequence of chromosome of Natranaerobius thermophilus JW/NM-WN-LF.</title>
        <authorList>
            <consortium name="US DOE Joint Genome Institute"/>
            <person name="Copeland A."/>
            <person name="Lucas S."/>
            <person name="Lapidus A."/>
            <person name="Glavina del Rio T."/>
            <person name="Dalin E."/>
            <person name="Tice H."/>
            <person name="Bruce D."/>
            <person name="Goodwin L."/>
            <person name="Pitluck S."/>
            <person name="Chertkov O."/>
            <person name="Brettin T."/>
            <person name="Detter J.C."/>
            <person name="Han C."/>
            <person name="Kuske C.R."/>
            <person name="Schmutz J."/>
            <person name="Larimer F."/>
            <person name="Land M."/>
            <person name="Hauser L."/>
            <person name="Kyrpides N."/>
            <person name="Lykidis A."/>
            <person name="Mesbah N.M."/>
            <person name="Wiegel J."/>
        </authorList>
    </citation>
    <scope>NUCLEOTIDE SEQUENCE [LARGE SCALE GENOMIC DNA]</scope>
    <source>
        <strain>ATCC BAA-1301 / DSM 18059 / JW/NM-WN-LF</strain>
    </source>
</reference>
<dbReference type="EC" id="3.1.11.6" evidence="1"/>
<dbReference type="EMBL" id="CP001034">
    <property type="protein sequence ID" value="ACB85273.1"/>
    <property type="molecule type" value="Genomic_DNA"/>
</dbReference>
<dbReference type="RefSeq" id="WP_012448141.1">
    <property type="nucleotide sequence ID" value="NC_010718.1"/>
</dbReference>
<dbReference type="SMR" id="B2A531"/>
<dbReference type="FunCoup" id="B2A531">
    <property type="interactions" value="392"/>
</dbReference>
<dbReference type="STRING" id="457570.Nther_1699"/>
<dbReference type="KEGG" id="nth:Nther_1699"/>
<dbReference type="eggNOG" id="COG1570">
    <property type="taxonomic scope" value="Bacteria"/>
</dbReference>
<dbReference type="HOGENOM" id="CLU_023625_3_1_9"/>
<dbReference type="InParanoid" id="B2A531"/>
<dbReference type="OrthoDB" id="9802795at2"/>
<dbReference type="Proteomes" id="UP000001683">
    <property type="component" value="Chromosome"/>
</dbReference>
<dbReference type="GO" id="GO:0005737">
    <property type="term" value="C:cytoplasm"/>
    <property type="evidence" value="ECO:0007669"/>
    <property type="project" value="UniProtKB-SubCell"/>
</dbReference>
<dbReference type="GO" id="GO:0009318">
    <property type="term" value="C:exodeoxyribonuclease VII complex"/>
    <property type="evidence" value="ECO:0007669"/>
    <property type="project" value="InterPro"/>
</dbReference>
<dbReference type="GO" id="GO:0008855">
    <property type="term" value="F:exodeoxyribonuclease VII activity"/>
    <property type="evidence" value="ECO:0007669"/>
    <property type="project" value="UniProtKB-UniRule"/>
</dbReference>
<dbReference type="GO" id="GO:0003676">
    <property type="term" value="F:nucleic acid binding"/>
    <property type="evidence" value="ECO:0007669"/>
    <property type="project" value="InterPro"/>
</dbReference>
<dbReference type="GO" id="GO:0006308">
    <property type="term" value="P:DNA catabolic process"/>
    <property type="evidence" value="ECO:0007669"/>
    <property type="project" value="UniProtKB-UniRule"/>
</dbReference>
<dbReference type="CDD" id="cd04489">
    <property type="entry name" value="ExoVII_LU_OBF"/>
    <property type="match status" value="1"/>
</dbReference>
<dbReference type="HAMAP" id="MF_00378">
    <property type="entry name" value="Exonuc_7_L"/>
    <property type="match status" value="1"/>
</dbReference>
<dbReference type="InterPro" id="IPR003753">
    <property type="entry name" value="Exonuc_VII_L"/>
</dbReference>
<dbReference type="InterPro" id="IPR020579">
    <property type="entry name" value="Exonuc_VII_lsu_C"/>
</dbReference>
<dbReference type="InterPro" id="IPR025824">
    <property type="entry name" value="OB-fold_nuc-bd_dom"/>
</dbReference>
<dbReference type="NCBIfam" id="TIGR00237">
    <property type="entry name" value="xseA"/>
    <property type="match status" value="1"/>
</dbReference>
<dbReference type="PANTHER" id="PTHR30008">
    <property type="entry name" value="EXODEOXYRIBONUCLEASE 7 LARGE SUBUNIT"/>
    <property type="match status" value="1"/>
</dbReference>
<dbReference type="PANTHER" id="PTHR30008:SF0">
    <property type="entry name" value="EXODEOXYRIBONUCLEASE 7 LARGE SUBUNIT"/>
    <property type="match status" value="1"/>
</dbReference>
<dbReference type="Pfam" id="PF02601">
    <property type="entry name" value="Exonuc_VII_L"/>
    <property type="match status" value="2"/>
</dbReference>
<dbReference type="Pfam" id="PF13742">
    <property type="entry name" value="tRNA_anti_2"/>
    <property type="match status" value="1"/>
</dbReference>